<protein>
    <recommendedName>
        <fullName evidence="16">Very long-chain fatty acid transport protein</fullName>
        <ecNumber evidence="9">6.2.1.-</ecNumber>
    </recommendedName>
    <alternativeName>
        <fullName>Very-long-chain acyl-CoA synthetase</fullName>
        <shortName>VLCS</shortName>
    </alternativeName>
</protein>
<organism>
    <name type="scientific">Saccharomyces cerevisiae (strain ATCC 204508 / S288c)</name>
    <name type="common">Baker's yeast</name>
    <dbReference type="NCBI Taxonomy" id="559292"/>
    <lineage>
        <taxon>Eukaryota</taxon>
        <taxon>Fungi</taxon>
        <taxon>Dikarya</taxon>
        <taxon>Ascomycota</taxon>
        <taxon>Saccharomycotina</taxon>
        <taxon>Saccharomycetes</taxon>
        <taxon>Saccharomycetales</taxon>
        <taxon>Saccharomycetaceae</taxon>
        <taxon>Saccharomyces</taxon>
    </lineage>
</organism>
<reference key="1">
    <citation type="journal article" date="1997" name="J. Biol. Chem.">
        <title>Disruption of the Saccharomyces cerevisiae homologue to the murine fatty acid transport protein impairs uptake and growth on long-chain fatty acids.</title>
        <authorList>
            <person name="Faergeman N.J."/>
            <person name="Dirusso C.C."/>
            <person name="Elberger A."/>
            <person name="Knudsen J."/>
            <person name="Black P.N."/>
        </authorList>
    </citation>
    <scope>NUCLEOTIDE SEQUENCE [GENOMIC DNA]</scope>
    <scope>CHARACTERIZATION</scope>
    <source>
        <strain>W303A</strain>
    </source>
</reference>
<reference key="2">
    <citation type="journal article" date="1994" name="EMBO J.">
        <title>Complete DNA sequence of yeast chromosome II.</title>
        <authorList>
            <person name="Feldmann H."/>
            <person name="Aigle M."/>
            <person name="Aljinovic G."/>
            <person name="Andre B."/>
            <person name="Baclet M.C."/>
            <person name="Barthe C."/>
            <person name="Baur A."/>
            <person name="Becam A.-M."/>
            <person name="Biteau N."/>
            <person name="Boles E."/>
            <person name="Brandt T."/>
            <person name="Brendel M."/>
            <person name="Brueckner M."/>
            <person name="Bussereau F."/>
            <person name="Christiansen C."/>
            <person name="Contreras R."/>
            <person name="Crouzet M."/>
            <person name="Cziepluch C."/>
            <person name="Demolis N."/>
            <person name="Delaveau T."/>
            <person name="Doignon F."/>
            <person name="Domdey H."/>
            <person name="Duesterhus S."/>
            <person name="Dubois E."/>
            <person name="Dujon B."/>
            <person name="El Bakkoury M."/>
            <person name="Entian K.-D."/>
            <person name="Feuermann M."/>
            <person name="Fiers W."/>
            <person name="Fobo G.M."/>
            <person name="Fritz C."/>
            <person name="Gassenhuber J."/>
            <person name="Glansdorff N."/>
            <person name="Goffeau A."/>
            <person name="Grivell L.A."/>
            <person name="de Haan M."/>
            <person name="Hein C."/>
            <person name="Herbert C.J."/>
            <person name="Hollenberg C.P."/>
            <person name="Holmstroem K."/>
            <person name="Jacq C."/>
            <person name="Jacquet M."/>
            <person name="Jauniaux J.-C."/>
            <person name="Jonniaux J.-L."/>
            <person name="Kallesoee T."/>
            <person name="Kiesau P."/>
            <person name="Kirchrath L."/>
            <person name="Koetter P."/>
            <person name="Korol S."/>
            <person name="Liebl S."/>
            <person name="Logghe M."/>
            <person name="Lohan A.J.E."/>
            <person name="Louis E.J."/>
            <person name="Li Z.Y."/>
            <person name="Maat M.J."/>
            <person name="Mallet L."/>
            <person name="Mannhaupt G."/>
            <person name="Messenguy F."/>
            <person name="Miosga T."/>
            <person name="Molemans F."/>
            <person name="Mueller S."/>
            <person name="Nasr F."/>
            <person name="Obermaier B."/>
            <person name="Perea J."/>
            <person name="Pierard A."/>
            <person name="Piravandi E."/>
            <person name="Pohl F.M."/>
            <person name="Pohl T.M."/>
            <person name="Potier S."/>
            <person name="Proft M."/>
            <person name="Purnelle B."/>
            <person name="Ramezani Rad M."/>
            <person name="Rieger M."/>
            <person name="Rose M."/>
            <person name="Schaaff-Gerstenschlaeger I."/>
            <person name="Scherens B."/>
            <person name="Schwarzlose C."/>
            <person name="Skala J."/>
            <person name="Slonimski P.P."/>
            <person name="Smits P.H.M."/>
            <person name="Souciet J.-L."/>
            <person name="Steensma H.Y."/>
            <person name="Stucka R."/>
            <person name="Urrestarazu L.A."/>
            <person name="van der Aart Q.J.M."/>
            <person name="Van Dyck L."/>
            <person name="Vassarotti A."/>
            <person name="Vetter I."/>
            <person name="Vierendeels F."/>
            <person name="Vissers S."/>
            <person name="Wagner G."/>
            <person name="de Wergifosse P."/>
            <person name="Wolfe K.H."/>
            <person name="Zagulski M."/>
            <person name="Zimmermann F.K."/>
            <person name="Mewes H.-W."/>
            <person name="Kleine K."/>
        </authorList>
    </citation>
    <scope>NUCLEOTIDE SEQUENCE [LARGE SCALE GENOMIC DNA]</scope>
    <source>
        <strain>ATCC 204508 / S288c</strain>
    </source>
</reference>
<reference key="3">
    <citation type="journal article" date="2014" name="G3 (Bethesda)">
        <title>The reference genome sequence of Saccharomyces cerevisiae: Then and now.</title>
        <authorList>
            <person name="Engel S.R."/>
            <person name="Dietrich F.S."/>
            <person name="Fisk D.G."/>
            <person name="Binkley G."/>
            <person name="Balakrishnan R."/>
            <person name="Costanzo M.C."/>
            <person name="Dwight S.S."/>
            <person name="Hitz B.C."/>
            <person name="Karra K."/>
            <person name="Nash R.S."/>
            <person name="Weng S."/>
            <person name="Wong E.D."/>
            <person name="Lloyd P."/>
            <person name="Skrzypek M.S."/>
            <person name="Miyasato S.R."/>
            <person name="Simison M."/>
            <person name="Cherry J.M."/>
        </authorList>
    </citation>
    <scope>GENOME REANNOTATION</scope>
    <source>
        <strain>ATCC 204508 / S288c</strain>
    </source>
</reference>
<reference key="4">
    <citation type="submission" date="2003-03" db="EMBL/GenBank/DDBJ databases">
        <title>Saccharomyces cerevisiae YBR041W sequence update.</title>
        <authorList>
            <person name="Zhang Z."/>
            <person name="Stuart L.T."/>
            <person name="Dietrich F.S."/>
        </authorList>
    </citation>
    <scope>NUCLEOTIDE SEQUENCE [GENOMIC DNA] OF 590-639</scope>
    <source>
        <strain>ATCC 204508 / S288c</strain>
    </source>
</reference>
<reference key="5">
    <citation type="journal article" date="1998" name="J. Biol. Chem.">
        <title>Disruption of the Saccharomyces cerevisiae FAT1 gene decreases very long-chain fatty acyl-CoA synthetase activity and elevates intracellular very long-chain fatty acid concentrations.</title>
        <authorList>
            <person name="Watkins P.A."/>
            <person name="Lu J.F."/>
            <person name="Steinberg S.J."/>
            <person name="Gould S.J."/>
            <person name="Smith K.D."/>
            <person name="Braiterman L.T."/>
        </authorList>
    </citation>
    <scope>FUNCTION</scope>
</reference>
<reference key="6">
    <citation type="journal article" date="1999" name="J. Bacteriol.">
        <title>Identification and characterization of major lipid particle proteins of the yeast Saccharomyces cerevisiae.</title>
        <authorList>
            <person name="Athenstaedt K."/>
            <person name="Zweytick D."/>
            <person name="Jandrositz A."/>
            <person name="Kohlwein S.D."/>
            <person name="Daum G."/>
        </authorList>
    </citation>
    <scope>SUBCELLULAR LOCATION</scope>
</reference>
<reference key="7">
    <citation type="journal article" date="1999" name="J. Biol. Chem.">
        <title>The Saccharomyces cerevisiae FAT1 gene encodes an acyl-CoA synthetase that is required for maintenance of very long chain fatty acid levels.</title>
        <authorList>
            <person name="Choi J.Y."/>
            <person name="Martin C.E."/>
        </authorList>
    </citation>
    <scope>FUNCTION</scope>
</reference>
<reference key="8">
    <citation type="journal article" date="2000" name="Cell Biochem. Biophys.">
        <title>Disruption of a yeast very-long-chain acyl-CoA synthetase gene simulates the cellular phenotype of X-linked adrenoleukodystrophy.</title>
        <authorList>
            <person name="Watkins P.A."/>
            <person name="Lu J.F."/>
            <person name="Braiterman L.T."/>
            <person name="Steinberg S.J."/>
            <person name="Smith K.D."/>
        </authorList>
    </citation>
    <scope>FUNCTION</scope>
    <scope>SUBCELLULAR LOCATION</scope>
</reference>
<reference key="9">
    <citation type="journal article" date="2002" name="J. Biol. Chem.">
        <title>Fatty acid transport in Saccharomyces cerevisiae. Directed mutagenesis of FAT1 distinguishes the biochemical activities associated with Fat1p.</title>
        <authorList>
            <person name="Zou Z."/>
            <person name="DiRusso C.C."/>
            <person name="Ctrnacta V."/>
            <person name="Black P.N."/>
        </authorList>
    </citation>
    <scope>FUNCTION</scope>
</reference>
<reference key="10">
    <citation type="journal article" date="2003" name="J. Biol. Chem.">
        <title>Vectorial acylation in Saccharomyces cerevisiae. Fat1p and fatty acyl-CoA synthetase are interacting components of a fatty acid import complex.</title>
        <authorList>
            <person name="Zou Z."/>
            <person name="Tong F."/>
            <person name="Faergeman N.J."/>
            <person name="Boersting C."/>
            <person name="Black P.N."/>
            <person name="DiRusso C.C."/>
        </authorList>
    </citation>
    <scope>FUNCTION</scope>
    <scope>CATALYTIC ACTIVITY</scope>
    <scope>INTERACTION WITH FAA1 AND FAA4</scope>
</reference>
<reference key="11">
    <citation type="journal article" date="2003" name="Nature">
        <title>Global analysis of protein expression in yeast.</title>
        <authorList>
            <person name="Ghaemmaghami S."/>
            <person name="Huh W.-K."/>
            <person name="Bower K."/>
            <person name="Howson R.W."/>
            <person name="Belle A."/>
            <person name="Dephoure N."/>
            <person name="O'Shea E.K."/>
            <person name="Weissman J.S."/>
        </authorList>
    </citation>
    <scope>LEVEL OF PROTEIN EXPRESSION [LARGE SCALE ANALYSIS]</scope>
</reference>
<reference key="12">
    <citation type="journal article" date="2005" name="J. Biol. Chem.">
        <title>Comparative biochemical studies of the murine fatty acid transport proteins (FATP) expressed in yeast.</title>
        <authorList>
            <person name="DiRusso C.C."/>
            <person name="Li H."/>
            <person name="Darwis D."/>
            <person name="Watkins P.A."/>
            <person name="Berger J."/>
            <person name="Black P.N."/>
        </authorList>
    </citation>
    <scope>CATALYTIC ACTIVITY</scope>
</reference>
<reference key="13">
    <citation type="journal article" date="2007" name="J. Lipid Res.">
        <title>Topology of the yeast fatty acid transport protein Fat1p: mechanistic implications for functional domains on the cytosolic surface of the plasma membrane.</title>
        <authorList>
            <person name="Obermeyer T."/>
            <person name="Fraisl P."/>
            <person name="DiRusso C.C."/>
            <person name="Black P.N."/>
        </authorList>
    </citation>
    <scope>SUBCELLULAR LOCATION</scope>
    <scope>TOPOLOGY</scope>
</reference>
<reference key="14">
    <citation type="journal article" date="2011" name="Biochim. Biophys. Acta">
        <title>Lipid particles/droplets of the yeast Saccharomyces cerevisiae revisited: lipidome meets proteome.</title>
        <authorList>
            <person name="Grillitsch K."/>
            <person name="Connerth M."/>
            <person name="Kofeler H."/>
            <person name="Arrey T.N."/>
            <person name="Rietschel B."/>
            <person name="Wagner B."/>
            <person name="Karas M."/>
            <person name="Daum G."/>
        </authorList>
    </citation>
    <scope>SUBCELLULAR LOCATION</scope>
</reference>
<reference key="15">
    <citation type="journal article" date="2012" name="J. Biol. Chem.">
        <title>Peroxisomal fatty acid uptake mechanism in Saccharomyces cerevisiae.</title>
        <authorList>
            <person name="van Roermund C.W."/>
            <person name="Ijlst L."/>
            <person name="Majczak W."/>
            <person name="Waterham H.R."/>
            <person name="Folkerts H."/>
            <person name="Wanders R.J."/>
            <person name="Hellingwerf K.J."/>
        </authorList>
    </citation>
    <scope>FUNCTION</scope>
</reference>
<reference key="16">
    <citation type="journal article" date="2014" name="J. Lipid Res.">
        <title>High-confidence proteomic analysis of yeast lipid droplets identifies additional droplet proteins and reveals connections to dolichol synthesis and sterol acetylation.</title>
        <authorList>
            <person name="Currie E."/>
            <person name="Guo X."/>
            <person name="Christiano R."/>
            <person name="Chitraju C."/>
            <person name="Kory N."/>
            <person name="Harrison K."/>
            <person name="Haas J."/>
            <person name="Walther T.C."/>
            <person name="Farese R.V. Jr."/>
        </authorList>
    </citation>
    <scope>SUBCELLULAR LOCATION</scope>
</reference>
<keyword id="KW-0067">ATP-binding</keyword>
<keyword id="KW-1003">Cell membrane</keyword>
<keyword id="KW-0436">Ligase</keyword>
<keyword id="KW-0551">Lipid droplet</keyword>
<keyword id="KW-0445">Lipid transport</keyword>
<keyword id="KW-0472">Membrane</keyword>
<keyword id="KW-0547">Nucleotide-binding</keyword>
<keyword id="KW-0576">Peroxisome</keyword>
<keyword id="KW-1185">Reference proteome</keyword>
<keyword id="KW-0812">Transmembrane</keyword>
<keyword id="KW-1133">Transmembrane helix</keyword>
<keyword id="KW-0813">Transport</keyword>
<feature type="chain" id="PRO_0000193181" description="Very long-chain fatty acid transport protein">
    <location>
        <begin position="1"/>
        <end position="669"/>
    </location>
</feature>
<feature type="topological domain" description="Cytoplasmic" evidence="19">
    <location>
        <begin position="1"/>
        <end position="5"/>
    </location>
</feature>
<feature type="transmembrane region" description="Helical" evidence="3">
    <location>
        <begin position="6"/>
        <end position="26"/>
    </location>
</feature>
<feature type="topological domain" description="Extracellular" evidence="19">
    <location>
        <begin position="27"/>
        <end position="148"/>
    </location>
</feature>
<feature type="transmembrane region" description="Helical" evidence="3">
    <location>
        <begin position="149"/>
        <end position="169"/>
    </location>
</feature>
<feature type="topological domain" description="Cytoplasmic" evidence="19">
    <location>
        <begin position="170"/>
        <end position="270"/>
    </location>
</feature>
<feature type="intramembrane region" evidence="19">
    <location>
        <begin position="271"/>
        <end position="339"/>
    </location>
</feature>
<feature type="topological domain" description="Cytoplasmic" evidence="10">
    <location>
        <begin position="340"/>
        <end position="669"/>
    </location>
</feature>
<feature type="short sequence motif" description="FACS" evidence="1">
    <location>
        <begin position="501"/>
        <end position="551"/>
    </location>
</feature>
<feature type="short sequence motif" description="C-terminal peroxisome targeting signal (PTS1)" evidence="20">
    <location>
        <begin position="667"/>
        <end position="669"/>
    </location>
</feature>
<feature type="binding site" evidence="2">
    <location>
        <begin position="256"/>
        <end position="267"/>
    </location>
    <ligand>
        <name>ATP</name>
        <dbReference type="ChEBI" id="CHEBI:30616"/>
    </ligand>
</feature>
<gene>
    <name type="primary">FAT1</name>
    <name type="ordered locus">YBR041W</name>
    <name type="ORF">YBR0411</name>
</gene>
<dbReference type="EC" id="6.2.1.-" evidence="9"/>
<dbReference type="EMBL" id="AF065148">
    <property type="protein sequence ID" value="AAC17118.1"/>
    <property type="molecule type" value="Genomic_DNA"/>
</dbReference>
<dbReference type="EMBL" id="Z35910">
    <property type="protein sequence ID" value="CAA84983.1"/>
    <property type="status" value="ALT_FRAME"/>
    <property type="molecule type" value="Genomic_DNA"/>
</dbReference>
<dbReference type="EMBL" id="AY260890">
    <property type="protein sequence ID" value="AAP21758.1"/>
    <property type="molecule type" value="Genomic_DNA"/>
</dbReference>
<dbReference type="EMBL" id="BK006936">
    <property type="protein sequence ID" value="DAA07161.1"/>
    <property type="molecule type" value="Genomic_DNA"/>
</dbReference>
<dbReference type="PIR" id="S45899">
    <property type="entry name" value="S45899"/>
</dbReference>
<dbReference type="RefSeq" id="NP_009597.2">
    <property type="nucleotide sequence ID" value="NM_001178389.1"/>
</dbReference>
<dbReference type="SMR" id="P38225"/>
<dbReference type="BioGRID" id="32742">
    <property type="interactions" value="217"/>
</dbReference>
<dbReference type="DIP" id="DIP-5048N"/>
<dbReference type="FunCoup" id="P38225">
    <property type="interactions" value="175"/>
</dbReference>
<dbReference type="IntAct" id="P38225">
    <property type="interactions" value="14"/>
</dbReference>
<dbReference type="MINT" id="P38225"/>
<dbReference type="STRING" id="4932.YBR041W"/>
<dbReference type="SwissLipids" id="SLP:000000129"/>
<dbReference type="TCDB" id="4.C.1.1.2">
    <property type="family name" value="the fatty acid group translocation (fat) family"/>
</dbReference>
<dbReference type="PaxDb" id="4932-YBR041W"/>
<dbReference type="PeptideAtlas" id="P38225"/>
<dbReference type="EnsemblFungi" id="YBR041W_mRNA">
    <property type="protein sequence ID" value="YBR041W"/>
    <property type="gene ID" value="YBR041W"/>
</dbReference>
<dbReference type="GeneID" id="852329"/>
<dbReference type="KEGG" id="sce:YBR041W"/>
<dbReference type="AGR" id="SGD:S000000245"/>
<dbReference type="SGD" id="S000000245">
    <property type="gene designation" value="FAT1"/>
</dbReference>
<dbReference type="VEuPathDB" id="FungiDB:YBR041W"/>
<dbReference type="eggNOG" id="KOG1179">
    <property type="taxonomic scope" value="Eukaryota"/>
</dbReference>
<dbReference type="GeneTree" id="ENSGT00940000169294"/>
<dbReference type="HOGENOM" id="CLU_000022_46_3_1"/>
<dbReference type="InParanoid" id="P38225"/>
<dbReference type="OMA" id="VWRQFLD"/>
<dbReference type="OrthoDB" id="10253869at2759"/>
<dbReference type="BioCyc" id="YEAST:YBR041W-MONOMER"/>
<dbReference type="BRENDA" id="6.2.1.3">
    <property type="organism ID" value="984"/>
</dbReference>
<dbReference type="Reactome" id="R-SCE-159418">
    <property type="pathway name" value="Recycling of bile acids and salts"/>
</dbReference>
<dbReference type="Reactome" id="R-SCE-193368">
    <property type="pathway name" value="Synthesis of bile acids and bile salts via 7alpha-hydroxycholesterol"/>
</dbReference>
<dbReference type="Reactome" id="R-SCE-193775">
    <property type="pathway name" value="Synthesis of bile acids and bile salts via 24-hydroxycholesterol"/>
</dbReference>
<dbReference type="Reactome" id="R-SCE-389599">
    <property type="pathway name" value="Alpha-oxidation of phytanate"/>
</dbReference>
<dbReference type="Reactome" id="R-SCE-390247">
    <property type="pathway name" value="Beta-oxidation of very long chain fatty acids"/>
</dbReference>
<dbReference type="Reactome" id="R-SCE-6798695">
    <property type="pathway name" value="Neutrophil degranulation"/>
</dbReference>
<dbReference type="Reactome" id="R-SCE-75105">
    <property type="pathway name" value="Fatty acyl-CoA biosynthesis"/>
</dbReference>
<dbReference type="Reactome" id="R-SCE-804914">
    <property type="pathway name" value="Transport of fatty acids"/>
</dbReference>
<dbReference type="Reactome" id="R-SCE-9033241">
    <property type="pathway name" value="Peroxisomal protein import"/>
</dbReference>
<dbReference type="BioGRID-ORCS" id="852329">
    <property type="hits" value="0 hits in 10 CRISPR screens"/>
</dbReference>
<dbReference type="PRO" id="PR:P38225"/>
<dbReference type="Proteomes" id="UP000002311">
    <property type="component" value="Chromosome II"/>
</dbReference>
<dbReference type="RNAct" id="P38225">
    <property type="molecule type" value="protein"/>
</dbReference>
<dbReference type="GO" id="GO:0071944">
    <property type="term" value="C:cell periphery"/>
    <property type="evidence" value="ECO:0007005"/>
    <property type="project" value="SGD"/>
</dbReference>
<dbReference type="GO" id="GO:0009898">
    <property type="term" value="C:cytoplasmic side of plasma membrane"/>
    <property type="evidence" value="ECO:0000314"/>
    <property type="project" value="SGD"/>
</dbReference>
<dbReference type="GO" id="GO:0005783">
    <property type="term" value="C:endoplasmic reticulum"/>
    <property type="evidence" value="ECO:0000314"/>
    <property type="project" value="SGD"/>
</dbReference>
<dbReference type="GO" id="GO:0000329">
    <property type="term" value="C:fungal-type vacuole membrane"/>
    <property type="evidence" value="ECO:0007005"/>
    <property type="project" value="SGD"/>
</dbReference>
<dbReference type="GO" id="GO:0005811">
    <property type="term" value="C:lipid droplet"/>
    <property type="evidence" value="ECO:0000314"/>
    <property type="project" value="SGD"/>
</dbReference>
<dbReference type="GO" id="GO:0005778">
    <property type="term" value="C:peroxisomal membrane"/>
    <property type="evidence" value="ECO:0007669"/>
    <property type="project" value="UniProtKB-SubCell"/>
</dbReference>
<dbReference type="GO" id="GO:0005777">
    <property type="term" value="C:peroxisome"/>
    <property type="evidence" value="ECO:0000315"/>
    <property type="project" value="SGD"/>
</dbReference>
<dbReference type="GO" id="GO:0005886">
    <property type="term" value="C:plasma membrane"/>
    <property type="evidence" value="ECO:0000318"/>
    <property type="project" value="GO_Central"/>
</dbReference>
<dbReference type="GO" id="GO:0005524">
    <property type="term" value="F:ATP binding"/>
    <property type="evidence" value="ECO:0007669"/>
    <property type="project" value="UniProtKB-KW"/>
</dbReference>
<dbReference type="GO" id="GO:0005324">
    <property type="term" value="F:long-chain fatty acid transmembrane transporter activity"/>
    <property type="evidence" value="ECO:0000315"/>
    <property type="project" value="SGD"/>
</dbReference>
<dbReference type="GO" id="GO:0004467">
    <property type="term" value="F:long-chain fatty acid-CoA ligase activity"/>
    <property type="evidence" value="ECO:0000318"/>
    <property type="project" value="GO_Central"/>
</dbReference>
<dbReference type="GO" id="GO:0031957">
    <property type="term" value="F:very long-chain fatty acid-CoA ligase activity"/>
    <property type="evidence" value="ECO:0000315"/>
    <property type="project" value="SGD"/>
</dbReference>
<dbReference type="GO" id="GO:0044539">
    <property type="term" value="P:long-chain fatty acid import into cell"/>
    <property type="evidence" value="ECO:0000315"/>
    <property type="project" value="SGD"/>
</dbReference>
<dbReference type="GO" id="GO:0001676">
    <property type="term" value="P:long-chain fatty acid metabolic process"/>
    <property type="evidence" value="ECO:0000318"/>
    <property type="project" value="GO_Central"/>
</dbReference>
<dbReference type="GO" id="GO:0006515">
    <property type="term" value="P:protein quality control for misfolded or incompletely synthesized proteins"/>
    <property type="evidence" value="ECO:0000315"/>
    <property type="project" value="SGD"/>
</dbReference>
<dbReference type="GO" id="GO:0000038">
    <property type="term" value="P:very long-chain fatty acid metabolic process"/>
    <property type="evidence" value="ECO:0000315"/>
    <property type="project" value="SGD"/>
</dbReference>
<dbReference type="CDD" id="cd05937">
    <property type="entry name" value="FATP_chFAT1_like"/>
    <property type="match status" value="1"/>
</dbReference>
<dbReference type="FunFam" id="3.30.300.30:FF:000020">
    <property type="entry name" value="Long-chain fatty acid transporter"/>
    <property type="match status" value="1"/>
</dbReference>
<dbReference type="FunFam" id="3.40.50.12780:FF:000019">
    <property type="entry name" value="Long-chain fatty acid transporter"/>
    <property type="match status" value="1"/>
</dbReference>
<dbReference type="Gene3D" id="3.30.300.30">
    <property type="match status" value="1"/>
</dbReference>
<dbReference type="Gene3D" id="3.40.50.12780">
    <property type="entry name" value="N-terminal domain of ligase-like"/>
    <property type="match status" value="1"/>
</dbReference>
<dbReference type="InterPro" id="IPR045851">
    <property type="entry name" value="AMP-bd_C_sf"/>
</dbReference>
<dbReference type="InterPro" id="IPR020845">
    <property type="entry name" value="AMP-binding_CS"/>
</dbReference>
<dbReference type="InterPro" id="IPR000873">
    <property type="entry name" value="AMP-dep_synth/lig_dom"/>
</dbReference>
<dbReference type="InterPro" id="IPR042099">
    <property type="entry name" value="ANL_N_sf"/>
</dbReference>
<dbReference type="PANTHER" id="PTHR43107:SF15">
    <property type="entry name" value="FATTY ACID TRANSPORT PROTEIN 3, ISOFORM A"/>
    <property type="match status" value="1"/>
</dbReference>
<dbReference type="PANTHER" id="PTHR43107">
    <property type="entry name" value="LONG-CHAIN FATTY ACID TRANSPORT PROTEIN"/>
    <property type="match status" value="1"/>
</dbReference>
<dbReference type="Pfam" id="PF00501">
    <property type="entry name" value="AMP-binding"/>
    <property type="match status" value="1"/>
</dbReference>
<dbReference type="SUPFAM" id="SSF56801">
    <property type="entry name" value="Acetyl-CoA synthetase-like"/>
    <property type="match status" value="1"/>
</dbReference>
<dbReference type="PROSITE" id="PS00455">
    <property type="entry name" value="AMP_BINDING"/>
    <property type="match status" value="1"/>
</dbReference>
<sequence>MSPIQVVVFALSRIFLLLFRLIKLIITPIQKSLGYLFGNYFDELDRKYRYKEDWYIIPYFLKSVFCYIIDVRRHRFQNWYLFIKQVQQNGDHLAISYTRPMAEKGEFQLETFTYIETYNIVLRLSHILHFDYNVQAGDYVAIDCTNKPLFVFLWLSLWNIGAIPAFLNYNTKGTPLVHSLKISNITQVFIDPDASNPIRESEEEIKNALPDVKLNYLEEQDLMHELLNSQSPEFLQQDNVRTPLGLTDFKPSMLIYTSGTTGLPKSAIMSWRKSSVGCQVFGHVLHMTNESTVFTAMPLFHSTAALLGACAILSHGGCLALSHKFSASTFWKQVYLTGATHIQYVGEVCRYLLHTPISKYEKMHKVKVAYGNGLRPDIWQDFRKRFNIEVIGEFYAATEAPFATTTFQKGDFGIGACRNYGTIIQWFLSFQQTLVRMDPNDDSVIYRNSKGFCEVAPVGEPGEMLMRIFFPKKPETSFQGYLGNAKETKSKVVRDVFRRGDAWYRCGDLLKADEYGLWYFLDRMGDTFRWKSENVSTTEVEDQLTASNKEQYAQVLVVGIKVPKYEGRAGFAVIKLTDNSLDITAKTKLLNDSLSRLNLPSYAMPLFVKFVDEIKMTDNHKILKKVYREQKLPKGLDGNDTIFWLKNYKRYEVLTAADWEAIDAQTIKL</sequence>
<proteinExistence type="evidence at protein level"/>
<accession>P38225</accession>
<accession>D6VQ41</accession>
<accession>O60021</accession>
<accession>Q86ZS3</accession>
<evidence type="ECO:0000250" key="1">
    <source>
        <dbReference type="UniProtKB" id="P30624"/>
    </source>
</evidence>
<evidence type="ECO:0000250" key="2">
    <source>
        <dbReference type="UniProtKB" id="P69451"/>
    </source>
</evidence>
<evidence type="ECO:0000255" key="3"/>
<evidence type="ECO:0000269" key="4">
    <source>
    </source>
</evidence>
<evidence type="ECO:0000269" key="5">
    <source>
    </source>
</evidence>
<evidence type="ECO:0000269" key="6">
    <source>
    </source>
</evidence>
<evidence type="ECO:0000269" key="7">
    <source>
    </source>
</evidence>
<evidence type="ECO:0000269" key="8">
    <source>
    </source>
</evidence>
<evidence type="ECO:0000269" key="9">
    <source>
    </source>
</evidence>
<evidence type="ECO:0000269" key="10">
    <source>
    </source>
</evidence>
<evidence type="ECO:0000269" key="11">
    <source>
    </source>
</evidence>
<evidence type="ECO:0000269" key="12">
    <source>
    </source>
</evidence>
<evidence type="ECO:0000269" key="13">
    <source>
    </source>
</evidence>
<evidence type="ECO:0000269" key="14">
    <source>
    </source>
</evidence>
<evidence type="ECO:0000269" key="15">
    <source>
    </source>
</evidence>
<evidence type="ECO:0000305" key="16"/>
<evidence type="ECO:0000305" key="17">
    <source>
    </source>
</evidence>
<evidence type="ECO:0000305" key="18">
    <source>
    </source>
</evidence>
<evidence type="ECO:0000305" key="19">
    <source>
    </source>
</evidence>
<evidence type="ECO:0000305" key="20">
    <source>
    </source>
</evidence>
<comment type="function">
    <text evidence="5 6 7 12 14 15">Acyl-CoA synthetase required for both the import of long chain fatty acids (LCFAs) (C14-C18) and the activation very long chain fatty acids (VLCFAs) (C20-C26) by esterification of the fatty acids into metabolically active CoA-thioesters for subsequent degradation or incorporation into phospholipids (PubMed:11330068, PubMed:12052836, PubMed:12601005, PubMed:9079682, PubMed:9988704). The transport and fatty acyl-CoA synthetase activities are genetically separable and are thus independent activities (PubMed:12052836). Esterifies VLCFAs in the peroxisome matrix. The VLCFAs are actively transported into peroxisomes by a PXA1-PXA2 heterodimeric transporter in the peroxisomal membrane (PubMed:22493507).</text>
</comment>
<comment type="catalytic activity">
    <reaction evidence="9">
        <text>a very long-chain fatty acid + ATP + CoA = a very long-chain fatty acyl-CoA + AMP + diphosphate</text>
        <dbReference type="Rhea" id="RHEA:54536"/>
        <dbReference type="ChEBI" id="CHEBI:30616"/>
        <dbReference type="ChEBI" id="CHEBI:33019"/>
        <dbReference type="ChEBI" id="CHEBI:57287"/>
        <dbReference type="ChEBI" id="CHEBI:58950"/>
        <dbReference type="ChEBI" id="CHEBI:138261"/>
        <dbReference type="ChEBI" id="CHEBI:456215"/>
    </reaction>
</comment>
<comment type="catalytic activity">
    <reaction evidence="7 9">
        <text>tetracosanoate + ATP + CoA = tetracosanoyl-CoA + AMP + diphosphate</text>
        <dbReference type="Rhea" id="RHEA:33639"/>
        <dbReference type="ChEBI" id="CHEBI:30616"/>
        <dbReference type="ChEBI" id="CHEBI:31014"/>
        <dbReference type="ChEBI" id="CHEBI:33019"/>
        <dbReference type="ChEBI" id="CHEBI:57287"/>
        <dbReference type="ChEBI" id="CHEBI:65052"/>
        <dbReference type="ChEBI" id="CHEBI:456215"/>
    </reaction>
    <physiologicalReaction direction="left-to-right" evidence="17 18">
        <dbReference type="Rhea" id="RHEA:33640"/>
    </physiologicalReaction>
</comment>
<comment type="subunit">
    <text evidence="7">Interacts with fatty acyl-CoA synthetases FAA1 and FAA4.</text>
</comment>
<comment type="subcellular location">
    <subcellularLocation>
        <location evidence="4 11 13">Lipid droplet</location>
    </subcellularLocation>
    <subcellularLocation>
        <location evidence="10">Cell membrane</location>
        <topology evidence="3">Multi-pass membrane protein</topology>
    </subcellularLocation>
    <subcellularLocation>
        <location evidence="12">Peroxisome membrane</location>
        <topology evidence="3">Multi-pass membrane protein</topology>
    </subcellularLocation>
    <subcellularLocation>
        <location evidence="5">Peroxisome</location>
    </subcellularLocation>
</comment>
<comment type="domain">
    <text evidence="1">The FACS motif is required for catalytic activity and substrate specificity.</text>
</comment>
<comment type="miscellaneous">
    <text evidence="8">Present with 16900 molecules/cell in log phase SD medium.</text>
</comment>
<comment type="similarity">
    <text evidence="16">Belongs to the ATP-dependent AMP-binding enzyme family.</text>
</comment>
<comment type="sequence caution" evidence="16">
    <conflict type="frameshift">
        <sequence resource="EMBL-CDS" id="CAA84983"/>
    </conflict>
</comment>
<name>FAT1_YEAST</name>